<keyword id="KW-0472">Membrane</keyword>
<keyword id="KW-0520">NAD</keyword>
<keyword id="KW-0521">NADP</keyword>
<keyword id="KW-0618">Plastoquinone</keyword>
<keyword id="KW-0874">Quinone</keyword>
<keyword id="KW-1185">Reference proteome</keyword>
<keyword id="KW-0793">Thylakoid</keyword>
<keyword id="KW-1278">Translocase</keyword>
<keyword id="KW-0813">Transport</keyword>
<dbReference type="EC" id="7.1.1.-" evidence="1"/>
<dbReference type="EMBL" id="CP001287">
    <property type="protein sequence ID" value="ACK64612.1"/>
    <property type="molecule type" value="Genomic_DNA"/>
</dbReference>
<dbReference type="RefSeq" id="WP_012593889.1">
    <property type="nucleotide sequence ID" value="NC_011726.1"/>
</dbReference>
<dbReference type="SMR" id="B7JVP1"/>
<dbReference type="STRING" id="41431.PCC8801_0521"/>
<dbReference type="KEGG" id="cyp:PCC8801_0521"/>
<dbReference type="eggNOG" id="ENOG5032XZT">
    <property type="taxonomic scope" value="Bacteria"/>
</dbReference>
<dbReference type="HOGENOM" id="CLU_195299_0_0_3"/>
<dbReference type="OrthoDB" id="426633at2"/>
<dbReference type="Proteomes" id="UP000008204">
    <property type="component" value="Chromosome"/>
</dbReference>
<dbReference type="GO" id="GO:0031676">
    <property type="term" value="C:plasma membrane-derived thylakoid membrane"/>
    <property type="evidence" value="ECO:0007669"/>
    <property type="project" value="UniProtKB-SubCell"/>
</dbReference>
<dbReference type="GO" id="GO:0016655">
    <property type="term" value="F:oxidoreductase activity, acting on NAD(P)H, quinone or similar compound as acceptor"/>
    <property type="evidence" value="ECO:0007669"/>
    <property type="project" value="UniProtKB-UniRule"/>
</dbReference>
<dbReference type="GO" id="GO:0048038">
    <property type="term" value="F:quinone binding"/>
    <property type="evidence" value="ECO:0007669"/>
    <property type="project" value="UniProtKB-KW"/>
</dbReference>
<dbReference type="HAMAP" id="MF_01354">
    <property type="entry name" value="NDH1_NDH1O"/>
    <property type="match status" value="1"/>
</dbReference>
<dbReference type="InterPro" id="IPR020905">
    <property type="entry name" value="NdhO"/>
</dbReference>
<dbReference type="Pfam" id="PF11910">
    <property type="entry name" value="NdhO"/>
    <property type="match status" value="1"/>
</dbReference>
<name>NDHO_RIPO1</name>
<organism>
    <name type="scientific">Rippkaea orientalis (strain PCC 8801 / RF-1)</name>
    <name type="common">Cyanothece sp. (strain PCC 8801)</name>
    <dbReference type="NCBI Taxonomy" id="41431"/>
    <lineage>
        <taxon>Bacteria</taxon>
        <taxon>Bacillati</taxon>
        <taxon>Cyanobacteriota</taxon>
        <taxon>Cyanophyceae</taxon>
        <taxon>Oscillatoriophycideae</taxon>
        <taxon>Chroococcales</taxon>
        <taxon>Aphanothecaceae</taxon>
        <taxon>Rippkaea</taxon>
        <taxon>Rippkaea orientalis</taxon>
    </lineage>
</organism>
<reference key="1">
    <citation type="journal article" date="2011" name="MBio">
        <title>Novel metabolic attributes of the genus Cyanothece, comprising a group of unicellular nitrogen-fixing Cyanobacteria.</title>
        <authorList>
            <person name="Bandyopadhyay A."/>
            <person name="Elvitigala T."/>
            <person name="Welsh E."/>
            <person name="Stockel J."/>
            <person name="Liberton M."/>
            <person name="Min H."/>
            <person name="Sherman L.A."/>
            <person name="Pakrasi H.B."/>
        </authorList>
    </citation>
    <scope>NUCLEOTIDE SEQUENCE [LARGE SCALE GENOMIC DNA]</scope>
    <source>
        <strain>PCC 8801 / RF-1</strain>
    </source>
</reference>
<feature type="chain" id="PRO_1000143677" description="NAD(P)H-quinone oxidoreductase subunit O">
    <location>
        <begin position="1"/>
        <end position="72"/>
    </location>
</feature>
<sequence>MAAKMKKGALVRAVKETLENSLEAQASDSRFPSYLFDSKGEILDLTDEYALVRFYVPTPSVWLRLDQLELAE</sequence>
<evidence type="ECO:0000255" key="1">
    <source>
        <dbReference type="HAMAP-Rule" id="MF_01354"/>
    </source>
</evidence>
<comment type="function">
    <text evidence="1">NDH-1 shuttles electrons from an unknown electron donor, via FMN and iron-sulfur (Fe-S) centers, to quinones in the respiratory and/or the photosynthetic chain. The immediate electron acceptor for the enzyme in this species is believed to be plastoquinone. Couples the redox reaction to proton translocation, and thus conserves the redox energy in a proton gradient. Cyanobacterial NDH-1 also plays a role in inorganic carbon-concentration.</text>
</comment>
<comment type="catalytic activity">
    <reaction evidence="1">
        <text>a plastoquinone + NADH + (n+1) H(+)(in) = a plastoquinol + NAD(+) + n H(+)(out)</text>
        <dbReference type="Rhea" id="RHEA:42608"/>
        <dbReference type="Rhea" id="RHEA-COMP:9561"/>
        <dbReference type="Rhea" id="RHEA-COMP:9562"/>
        <dbReference type="ChEBI" id="CHEBI:15378"/>
        <dbReference type="ChEBI" id="CHEBI:17757"/>
        <dbReference type="ChEBI" id="CHEBI:57540"/>
        <dbReference type="ChEBI" id="CHEBI:57945"/>
        <dbReference type="ChEBI" id="CHEBI:62192"/>
    </reaction>
</comment>
<comment type="catalytic activity">
    <reaction evidence="1">
        <text>a plastoquinone + NADPH + (n+1) H(+)(in) = a plastoquinol + NADP(+) + n H(+)(out)</text>
        <dbReference type="Rhea" id="RHEA:42612"/>
        <dbReference type="Rhea" id="RHEA-COMP:9561"/>
        <dbReference type="Rhea" id="RHEA-COMP:9562"/>
        <dbReference type="ChEBI" id="CHEBI:15378"/>
        <dbReference type="ChEBI" id="CHEBI:17757"/>
        <dbReference type="ChEBI" id="CHEBI:57783"/>
        <dbReference type="ChEBI" id="CHEBI:58349"/>
        <dbReference type="ChEBI" id="CHEBI:62192"/>
    </reaction>
</comment>
<comment type="subunit">
    <text evidence="1">NDH-1 can be composed of about 15 different subunits; different subcomplexes with different compositions have been identified which probably have different functions.</text>
</comment>
<comment type="subcellular location">
    <subcellularLocation>
        <location evidence="1">Cellular thylakoid membrane</location>
        <topology evidence="1">Peripheral membrane protein</topology>
        <orientation evidence="1">Cytoplasmic side</orientation>
    </subcellularLocation>
</comment>
<comment type="similarity">
    <text evidence="1">Belongs to the complex I NdhO subunit family.</text>
</comment>
<protein>
    <recommendedName>
        <fullName evidence="1">NAD(P)H-quinone oxidoreductase subunit O</fullName>
        <ecNumber evidence="1">7.1.1.-</ecNumber>
    </recommendedName>
    <alternativeName>
        <fullName evidence="1">NAD(P)H dehydrogenase I subunit O</fullName>
        <shortName evidence="1">NDH-1 subunit O</shortName>
        <shortName evidence="1">NDH-O</shortName>
    </alternativeName>
</protein>
<gene>
    <name evidence="1" type="primary">ndhO</name>
    <name type="ordered locus">PCC8801_0521</name>
</gene>
<accession>B7JVP1</accession>
<proteinExistence type="inferred from homology"/>